<name>ITL1A_MOUSE</name>
<feature type="signal peptide" evidence="2">
    <location>
        <begin position="1"/>
        <end position="18"/>
    </location>
</feature>
<feature type="chain" id="PRO_0000009145" description="Intelectin-1a">
    <location>
        <begin position="19"/>
        <end position="298"/>
    </location>
</feature>
<feature type="propeptide" id="PRO_0000009146" evidence="3">
    <location>
        <begin position="299"/>
        <end position="313"/>
    </location>
</feature>
<feature type="domain" description="Fibrinogen C-terminal" evidence="4">
    <location>
        <begin position="32"/>
        <end position="251"/>
    </location>
</feature>
<feature type="binding site" evidence="2">
    <location>
        <position position="86"/>
    </location>
    <ligand>
        <name>Ca(2+)</name>
        <dbReference type="ChEBI" id="CHEBI:29108"/>
        <label>1</label>
    </ligand>
</feature>
<feature type="binding site" evidence="2">
    <location>
        <position position="87"/>
    </location>
    <ligand>
        <name>Ca(2+)</name>
        <dbReference type="ChEBI" id="CHEBI:29108"/>
        <label>2</label>
    </ligand>
</feature>
<feature type="binding site" evidence="1">
    <location>
        <position position="89"/>
    </location>
    <ligand>
        <name>Ca(2+)</name>
        <dbReference type="ChEBI" id="CHEBI:29108"/>
        <label>2</label>
    </ligand>
</feature>
<feature type="binding site" evidence="2">
    <location>
        <position position="92"/>
    </location>
    <ligand>
        <name>Ca(2+)</name>
        <dbReference type="ChEBI" id="CHEBI:29108"/>
        <label>2</label>
    </ligand>
</feature>
<feature type="binding site" evidence="2">
    <location>
        <position position="97"/>
    </location>
    <ligand>
        <name>Ca(2+)</name>
        <dbReference type="ChEBI" id="CHEBI:29108"/>
        <label>1</label>
    </ligand>
</feature>
<feature type="binding site" evidence="2">
    <location>
        <position position="98"/>
    </location>
    <ligand>
        <name>Ca(2+)</name>
        <dbReference type="ChEBI" id="CHEBI:29108"/>
        <label>2</label>
    </ligand>
</feature>
<feature type="binding site" evidence="2">
    <location>
        <position position="133"/>
    </location>
    <ligand>
        <name>Ca(2+)</name>
        <dbReference type="ChEBI" id="CHEBI:29108"/>
        <label>1</label>
    </ligand>
</feature>
<feature type="binding site" evidence="2">
    <location>
        <position position="260"/>
    </location>
    <ligand>
        <name>Ca(2+)</name>
        <dbReference type="ChEBI" id="CHEBI:29108"/>
        <label>3</label>
    </ligand>
</feature>
<feature type="binding site" evidence="2">
    <location>
        <begin position="262"/>
        <end position="263"/>
    </location>
    <ligand>
        <name>a carbohydrate</name>
        <dbReference type="ChEBI" id="CHEBI:16646"/>
    </ligand>
</feature>
<feature type="binding site" evidence="2">
    <location>
        <position position="262"/>
    </location>
    <ligand>
        <name>Ca(2+)</name>
        <dbReference type="ChEBI" id="CHEBI:29108"/>
        <label>3</label>
    </ligand>
</feature>
<feature type="binding site" evidence="2">
    <location>
        <position position="274"/>
    </location>
    <ligand>
        <name>a carbohydrate</name>
        <dbReference type="ChEBI" id="CHEBI:16646"/>
    </ligand>
</feature>
<feature type="binding site" evidence="2">
    <location>
        <position position="274"/>
    </location>
    <ligand>
        <name>Ca(2+)</name>
        <dbReference type="ChEBI" id="CHEBI:29108"/>
        <label>3</label>
    </ligand>
</feature>
<feature type="binding site" evidence="2">
    <location>
        <position position="282"/>
    </location>
    <ligand>
        <name>Ca(2+)</name>
        <dbReference type="ChEBI" id="CHEBI:29108"/>
        <label>1</label>
    </ligand>
</feature>
<feature type="lipid moiety-binding region" description="GPI-anchor amidated serine" evidence="3">
    <location>
        <position position="298"/>
    </location>
</feature>
<feature type="disulfide bond" evidence="2">
    <location>
        <begin position="41"/>
        <end position="70"/>
    </location>
</feature>
<feature type="disulfide bond" evidence="2">
    <location>
        <begin position="94"/>
        <end position="280"/>
    </location>
</feature>
<feature type="disulfide bond" evidence="2">
    <location>
        <begin position="199"/>
        <end position="259"/>
    </location>
</feature>
<feature type="disulfide bond" evidence="2">
    <location>
        <begin position="251"/>
        <end position="265"/>
    </location>
</feature>
<evidence type="ECO:0000250" key="1">
    <source>
        <dbReference type="UniProtKB" id="Q5PPM0"/>
    </source>
</evidence>
<evidence type="ECO:0000250" key="2">
    <source>
        <dbReference type="UniProtKB" id="Q8WWA0"/>
    </source>
</evidence>
<evidence type="ECO:0000255" key="3"/>
<evidence type="ECO:0000255" key="4">
    <source>
        <dbReference type="PROSITE-ProRule" id="PRU00739"/>
    </source>
</evidence>
<evidence type="ECO:0000269" key="5">
    <source>
    </source>
</evidence>
<evidence type="ECO:0000269" key="6">
    <source>
    </source>
</evidence>
<evidence type="ECO:0000269" key="7">
    <source>
    </source>
</evidence>
<evidence type="ECO:0000269" key="8">
    <source>
    </source>
</evidence>
<evidence type="ECO:0000269" key="9">
    <source>
    </source>
</evidence>
<evidence type="ECO:0000269" key="10">
    <source>
    </source>
</evidence>
<evidence type="ECO:0000269" key="11">
    <source>
    </source>
</evidence>
<evidence type="ECO:0000269" key="12">
    <source>
    </source>
</evidence>
<evidence type="ECO:0000303" key="13">
    <source>
    </source>
</evidence>
<evidence type="ECO:0000305" key="14">
    <source>
    </source>
</evidence>
<sequence>MTQLGFLLFIMVATRGCSAAEENLDTNRWGNSFFSSLPRSCKEIKQEHTKAQDGLYFLRTKNGVIYQTFCDMTTAGGGWTLVASVHENNMRGKCTVGDRWSSQQGNRADYPEGDGNWANYNTFGSAEAATSDDYKNPGYFDIQAENLGIWHVPNKSPLHNWRKSSLLRYRTFTGFLQHLGHNLFGLYKKYPVKYGEGKCWTDNGPALPVVYDFGDARKTASYYSPSGQREFTAGYVQFRVFNNERAASALCAGVRVTGCNTEHHCIGGGGFFPEGNPVQCGDFASFDWDGYGTHNGYSSSRKITEAAVLLFYR</sequence>
<keyword id="KW-0106">Calcium</keyword>
<keyword id="KW-1003">Cell membrane</keyword>
<keyword id="KW-1015">Disulfide bond</keyword>
<keyword id="KW-0325">Glycoprotein</keyword>
<keyword id="KW-0336">GPI-anchor</keyword>
<keyword id="KW-0430">Lectin</keyword>
<keyword id="KW-0449">Lipoprotein</keyword>
<keyword id="KW-0472">Membrane</keyword>
<keyword id="KW-0479">Metal-binding</keyword>
<keyword id="KW-1185">Reference proteome</keyword>
<keyword id="KW-0964">Secreted</keyword>
<keyword id="KW-0732">Signal</keyword>
<gene>
    <name type="primary">Itln1</name>
    <name type="synonym">Intl</name>
    <name type="synonym">Itln</name>
    <name type="synonym">Itln1a</name>
    <name type="synonym">Itlna</name>
</gene>
<accession>O88310</accession>
<accession>Q5IWS3</accession>
<proteinExistence type="evidence at protein level"/>
<dbReference type="EMBL" id="AB016496">
    <property type="protein sequence ID" value="BAA31992.1"/>
    <property type="molecule type" value="mRNA"/>
</dbReference>
<dbReference type="EMBL" id="AY157363">
    <property type="protein sequence ID" value="AAO17802.1"/>
    <property type="molecule type" value="mRNA"/>
</dbReference>
<dbReference type="EMBL" id="AY157364">
    <property type="protein sequence ID" value="AAO17803.1"/>
    <property type="molecule type" value="mRNA"/>
</dbReference>
<dbReference type="EMBL" id="AY619693">
    <property type="protein sequence ID" value="AAU88049.1"/>
    <property type="molecule type" value="mRNA"/>
</dbReference>
<dbReference type="EMBL" id="AK007447">
    <property type="protein sequence ID" value="BAB25043.1"/>
    <property type="molecule type" value="mRNA"/>
</dbReference>
<dbReference type="CCDS" id="CCDS35777.1"/>
<dbReference type="PIR" id="JE0328">
    <property type="entry name" value="JE0328"/>
</dbReference>
<dbReference type="RefSeq" id="NP_034714.1">
    <property type="nucleotide sequence ID" value="NM_010584.3"/>
</dbReference>
<dbReference type="SMR" id="O88310"/>
<dbReference type="BioGRID" id="200841">
    <property type="interactions" value="1"/>
</dbReference>
<dbReference type="FunCoup" id="O88310">
    <property type="interactions" value="22"/>
</dbReference>
<dbReference type="STRING" id="10090.ENSMUSP00000043837"/>
<dbReference type="iPTMnet" id="O88310"/>
<dbReference type="PhosphoSitePlus" id="O88310"/>
<dbReference type="PaxDb" id="10090-ENSMUSP00000043837"/>
<dbReference type="ProteomicsDB" id="269415"/>
<dbReference type="Antibodypedia" id="47062">
    <property type="antibodies" value="344 antibodies from 35 providers"/>
</dbReference>
<dbReference type="DNASU" id="16429"/>
<dbReference type="Ensembl" id="ENSMUST00000043094.13">
    <property type="protein sequence ID" value="ENSMUSP00000043837.7"/>
    <property type="gene ID" value="ENSMUSG00000038209.13"/>
</dbReference>
<dbReference type="GeneID" id="16429"/>
<dbReference type="KEGG" id="mmu:16429"/>
<dbReference type="UCSC" id="uc007doq.2">
    <property type="organism name" value="mouse"/>
</dbReference>
<dbReference type="AGR" id="MGI:1333831"/>
<dbReference type="CTD" id="55600"/>
<dbReference type="MGI" id="MGI:1333831">
    <property type="gene designation" value="Itln1"/>
</dbReference>
<dbReference type="VEuPathDB" id="HostDB:ENSMUSG00000038209"/>
<dbReference type="eggNOG" id="ENOG502QU6C">
    <property type="taxonomic scope" value="Eukaryota"/>
</dbReference>
<dbReference type="GeneTree" id="ENSGT00940000154757"/>
<dbReference type="HOGENOM" id="CLU_066147_0_0_1"/>
<dbReference type="InParanoid" id="O88310"/>
<dbReference type="OMA" id="EIKDECP"/>
<dbReference type="OrthoDB" id="5971203at2759"/>
<dbReference type="PhylomeDB" id="O88310"/>
<dbReference type="TreeFam" id="TF328530"/>
<dbReference type="Reactome" id="R-MMU-6803157">
    <property type="pathway name" value="Antimicrobial peptides"/>
</dbReference>
<dbReference type="BioGRID-ORCS" id="16429">
    <property type="hits" value="7 hits in 76 CRISPR screens"/>
</dbReference>
<dbReference type="PRO" id="PR:O88310"/>
<dbReference type="Proteomes" id="UP000000589">
    <property type="component" value="Chromosome 1"/>
</dbReference>
<dbReference type="RNAct" id="O88310">
    <property type="molecule type" value="protein"/>
</dbReference>
<dbReference type="Bgee" id="ENSMUSG00000038209">
    <property type="expression patterns" value="Expressed in crypt of Lieberkuhn of small intestine and 48 other cell types or tissues"/>
</dbReference>
<dbReference type="ExpressionAtlas" id="O88310">
    <property type="expression patterns" value="baseline and differential"/>
</dbReference>
<dbReference type="GO" id="GO:0031526">
    <property type="term" value="C:brush border membrane"/>
    <property type="evidence" value="ECO:0000314"/>
    <property type="project" value="UniProtKB"/>
</dbReference>
<dbReference type="GO" id="GO:0062023">
    <property type="term" value="C:collagen-containing extracellular matrix"/>
    <property type="evidence" value="ECO:0007005"/>
    <property type="project" value="BHF-UCL"/>
</dbReference>
<dbReference type="GO" id="GO:0005576">
    <property type="term" value="C:extracellular region"/>
    <property type="evidence" value="ECO:0007669"/>
    <property type="project" value="UniProtKB-SubCell"/>
</dbReference>
<dbReference type="GO" id="GO:0045121">
    <property type="term" value="C:membrane raft"/>
    <property type="evidence" value="ECO:0000314"/>
    <property type="project" value="UniProtKB"/>
</dbReference>
<dbReference type="GO" id="GO:0043235">
    <property type="term" value="C:receptor complex"/>
    <property type="evidence" value="ECO:0000266"/>
    <property type="project" value="MGI"/>
</dbReference>
<dbReference type="GO" id="GO:0098552">
    <property type="term" value="C:side of membrane"/>
    <property type="evidence" value="ECO:0007669"/>
    <property type="project" value="UniProtKB-KW"/>
</dbReference>
<dbReference type="GO" id="GO:0005509">
    <property type="term" value="F:calcium ion binding"/>
    <property type="evidence" value="ECO:0000250"/>
    <property type="project" value="UniProtKB"/>
</dbReference>
<dbReference type="GO" id="GO:0030246">
    <property type="term" value="F:carbohydrate binding"/>
    <property type="evidence" value="ECO:0000250"/>
    <property type="project" value="MGI"/>
</dbReference>
<dbReference type="GO" id="GO:0070492">
    <property type="term" value="F:oligosaccharide binding"/>
    <property type="evidence" value="ECO:0000314"/>
    <property type="project" value="UniProtKB"/>
</dbReference>
<dbReference type="GO" id="GO:0046326">
    <property type="term" value="P:positive regulation of D-glucose import"/>
    <property type="evidence" value="ECO:0000250"/>
    <property type="project" value="UniProtKB"/>
</dbReference>
<dbReference type="GO" id="GO:0001934">
    <property type="term" value="P:positive regulation of protein phosphorylation"/>
    <property type="evidence" value="ECO:0000250"/>
    <property type="project" value="UniProtKB"/>
</dbReference>
<dbReference type="GO" id="GO:0009624">
    <property type="term" value="P:response to nematode"/>
    <property type="evidence" value="ECO:0000314"/>
    <property type="project" value="UniProtKB"/>
</dbReference>
<dbReference type="FunFam" id="3.90.215.10:FF:000011">
    <property type="entry name" value="Intelectin 1"/>
    <property type="match status" value="1"/>
</dbReference>
<dbReference type="Gene3D" id="3.90.215.10">
    <property type="entry name" value="Gamma Fibrinogen, chain A, domain 1"/>
    <property type="match status" value="1"/>
</dbReference>
<dbReference type="InterPro" id="IPR036056">
    <property type="entry name" value="Fibrinogen-like_C"/>
</dbReference>
<dbReference type="InterPro" id="IPR014716">
    <property type="entry name" value="Fibrinogen_a/b/g_C_1"/>
</dbReference>
<dbReference type="InterPro" id="IPR002181">
    <property type="entry name" value="Fibrinogen_a/b/g_C_dom"/>
</dbReference>
<dbReference type="NCBIfam" id="NF040941">
    <property type="entry name" value="GGGWT_bact"/>
    <property type="match status" value="1"/>
</dbReference>
<dbReference type="PANTHER" id="PTHR16146">
    <property type="entry name" value="INTELECTIN"/>
    <property type="match status" value="1"/>
</dbReference>
<dbReference type="PANTHER" id="PTHR16146:SF46">
    <property type="entry name" value="INTELECTIN-1A-RELATED"/>
    <property type="match status" value="1"/>
</dbReference>
<dbReference type="Pfam" id="PF00147">
    <property type="entry name" value="Fibrinogen_C"/>
    <property type="match status" value="1"/>
</dbReference>
<dbReference type="SUPFAM" id="SSF56496">
    <property type="entry name" value="Fibrinogen C-terminal domain-like"/>
    <property type="match status" value="1"/>
</dbReference>
<dbReference type="PROSITE" id="PS51406">
    <property type="entry name" value="FIBRINOGEN_C_2"/>
    <property type="match status" value="1"/>
</dbReference>
<protein>
    <recommendedName>
        <fullName>Intelectin-1a</fullName>
    </recommendedName>
    <alternativeName>
        <fullName>Galactofuranose-binding lectin</fullName>
    </alternativeName>
    <alternativeName>
        <fullName evidence="13 14">Intestinal lactoferrin receptor</fullName>
    </alternativeName>
</protein>
<organism>
    <name type="scientific">Mus musculus</name>
    <name type="common">Mouse</name>
    <dbReference type="NCBI Taxonomy" id="10090"/>
    <lineage>
        <taxon>Eukaryota</taxon>
        <taxon>Metazoa</taxon>
        <taxon>Chordata</taxon>
        <taxon>Craniata</taxon>
        <taxon>Vertebrata</taxon>
        <taxon>Euteleostomi</taxon>
        <taxon>Mammalia</taxon>
        <taxon>Eutheria</taxon>
        <taxon>Euarchontoglires</taxon>
        <taxon>Glires</taxon>
        <taxon>Rodentia</taxon>
        <taxon>Myomorpha</taxon>
        <taxon>Muroidea</taxon>
        <taxon>Muridae</taxon>
        <taxon>Murinae</taxon>
        <taxon>Mus</taxon>
        <taxon>Mus</taxon>
    </lineage>
</organism>
<comment type="function">
    <text evidence="2 11">Lectin that specifically recognizes microbial carbohydrate chains in a calcium-dependent manner (PubMed:26148048). Binds to microbial glycans that contain a terminal acyclic 1,2-diol moiety, including beta-linked D-galactofuranose (beta-Galf), D-phosphoglycerol-modified glycans, D-glycero-D-talo-oct-2-ulosonic acid (KO) and 3-deoxy-D-manno-oct-2-ulosonic acid (KDO). Binds to glycans from Gram-positive and Gram-negative bacteria, including K.pneumoniae, S.pneumoniae, Y.pestis, P.mirabilis and P.vulgaris. Does not bind mammalian glycans. Probably plays a role in the defense system against microorganisms. May function as adipokine that has no effect on basal glucose uptake but enhances insulin-stimulated glucose uptake in adipocytes. Increases AKT phosphorylation in the absence and presence of insulin. May interact with lactoferrin/LTF and increase its uptake, and may thereby play a role in iron absorption (By similarity).</text>
</comment>
<comment type="subunit">
    <text evidence="2 10">Monomer (PubMed:17621593). May interact with LTF (By similarity).</text>
</comment>
<comment type="subcellular location">
    <subcellularLocation>
        <location evidence="2">Cell membrane</location>
        <topology evidence="2">Lipid-anchor</topology>
        <topology evidence="2">GPI-anchor</topology>
    </subcellularLocation>
    <subcellularLocation>
        <location evidence="2">Secreted</location>
    </subcellularLocation>
    <text evidence="7">Enriched in lipid rafts.</text>
</comment>
<comment type="tissue specificity">
    <text evidence="5 6 7 8 12">Expressed in small intestinal Paneth cells in uninfected mice. Expression also detected in various other tissues including stomach, kidney, ovary and brain.</text>
</comment>
<comment type="developmental stage">
    <text evidence="5">In the embryo, levels are highest at day 7, decrease by mid-embryogenesis at day 11 and increase again in late embryogenesis at day 17.</text>
</comment>
<comment type="induction">
    <text evidence="9">By infection with the helminth parasite N.brasiliensis.</text>
</comment>
<comment type="mass spectrometry"/>
<comment type="miscellaneous">
    <text>Constitutive expression does not lead to enhanced immunity to N.brasiliensis or M.tuberculosis.</text>
</comment>
<reference key="1">
    <citation type="journal article" date="1998" name="Biochem. Biophys. Res. Commun.">
        <title>Cloning of the novel gene intelectin, which is expressed in intestinal Paneth cells in mice.</title>
        <authorList>
            <person name="Komiya T."/>
            <person name="Tanigawa Y."/>
            <person name="Hirohashi S."/>
        </authorList>
    </citation>
    <scope>NUCLEOTIDE SEQUENCE [MRNA]</scope>
    <scope>TISSUE SPECIFICITY</scope>
    <source>
        <strain>BALB/cJ</strain>
        <tissue>Intestine</tissue>
    </source>
</reference>
<reference key="2">
    <citation type="journal article" date="2004" name="Comp. Biochem. Physiol.">
        <title>The Xenopus laevis cortical granule lectin: cDNA cloning, developmental expression, and identification of the eglectin family of lectins.</title>
        <authorList>
            <person name="Chang B.Y."/>
            <person name="Peavy T.R."/>
            <person name="Wardrip N.J."/>
            <person name="Hedrick J.L."/>
        </authorList>
    </citation>
    <scope>NUCLEOTIDE SEQUENCE [MRNA]</scope>
    <source>
        <strain>C57BL/6J</strain>
        <strain>FVB/N</strain>
        <tissue>Intestine</tissue>
        <tissue>Thymus</tissue>
    </source>
</reference>
<reference key="3">
    <citation type="submission" date="2004-05" db="EMBL/GenBank/DDBJ databases">
        <title>Mouse homolog of the Xenopus laevis egg cortical granule lectin.</title>
        <authorList>
            <person name="Peavy T.R."/>
            <person name="Hedrick J.L."/>
        </authorList>
    </citation>
    <scope>NUCLEOTIDE SEQUENCE [MRNA]</scope>
    <source>
        <strain>NIH Swiss</strain>
        <tissue>Ovary</tissue>
    </source>
</reference>
<reference key="4">
    <citation type="journal article" date="2005" name="Science">
        <title>The transcriptional landscape of the mammalian genome.</title>
        <authorList>
            <person name="Carninci P."/>
            <person name="Kasukawa T."/>
            <person name="Katayama S."/>
            <person name="Gough J."/>
            <person name="Frith M.C."/>
            <person name="Maeda N."/>
            <person name="Oyama R."/>
            <person name="Ravasi T."/>
            <person name="Lenhard B."/>
            <person name="Wells C."/>
            <person name="Kodzius R."/>
            <person name="Shimokawa K."/>
            <person name="Bajic V.B."/>
            <person name="Brenner S.E."/>
            <person name="Batalov S."/>
            <person name="Forrest A.R."/>
            <person name="Zavolan M."/>
            <person name="Davis M.J."/>
            <person name="Wilming L.G."/>
            <person name="Aidinis V."/>
            <person name="Allen J.E."/>
            <person name="Ambesi-Impiombato A."/>
            <person name="Apweiler R."/>
            <person name="Aturaliya R.N."/>
            <person name="Bailey T.L."/>
            <person name="Bansal M."/>
            <person name="Baxter L."/>
            <person name="Beisel K.W."/>
            <person name="Bersano T."/>
            <person name="Bono H."/>
            <person name="Chalk A.M."/>
            <person name="Chiu K.P."/>
            <person name="Choudhary V."/>
            <person name="Christoffels A."/>
            <person name="Clutterbuck D.R."/>
            <person name="Crowe M.L."/>
            <person name="Dalla E."/>
            <person name="Dalrymple B.P."/>
            <person name="de Bono B."/>
            <person name="Della Gatta G."/>
            <person name="di Bernardo D."/>
            <person name="Down T."/>
            <person name="Engstrom P."/>
            <person name="Fagiolini M."/>
            <person name="Faulkner G."/>
            <person name="Fletcher C.F."/>
            <person name="Fukushima T."/>
            <person name="Furuno M."/>
            <person name="Futaki S."/>
            <person name="Gariboldi M."/>
            <person name="Georgii-Hemming P."/>
            <person name="Gingeras T.R."/>
            <person name="Gojobori T."/>
            <person name="Green R.E."/>
            <person name="Gustincich S."/>
            <person name="Harbers M."/>
            <person name="Hayashi Y."/>
            <person name="Hensch T.K."/>
            <person name="Hirokawa N."/>
            <person name="Hill D."/>
            <person name="Huminiecki L."/>
            <person name="Iacono M."/>
            <person name="Ikeo K."/>
            <person name="Iwama A."/>
            <person name="Ishikawa T."/>
            <person name="Jakt M."/>
            <person name="Kanapin A."/>
            <person name="Katoh M."/>
            <person name="Kawasawa Y."/>
            <person name="Kelso J."/>
            <person name="Kitamura H."/>
            <person name="Kitano H."/>
            <person name="Kollias G."/>
            <person name="Krishnan S.P."/>
            <person name="Kruger A."/>
            <person name="Kummerfeld S.K."/>
            <person name="Kurochkin I.V."/>
            <person name="Lareau L.F."/>
            <person name="Lazarevic D."/>
            <person name="Lipovich L."/>
            <person name="Liu J."/>
            <person name="Liuni S."/>
            <person name="McWilliam S."/>
            <person name="Madan Babu M."/>
            <person name="Madera M."/>
            <person name="Marchionni L."/>
            <person name="Matsuda H."/>
            <person name="Matsuzawa S."/>
            <person name="Miki H."/>
            <person name="Mignone F."/>
            <person name="Miyake S."/>
            <person name="Morris K."/>
            <person name="Mottagui-Tabar S."/>
            <person name="Mulder N."/>
            <person name="Nakano N."/>
            <person name="Nakauchi H."/>
            <person name="Ng P."/>
            <person name="Nilsson R."/>
            <person name="Nishiguchi S."/>
            <person name="Nishikawa S."/>
            <person name="Nori F."/>
            <person name="Ohara O."/>
            <person name="Okazaki Y."/>
            <person name="Orlando V."/>
            <person name="Pang K.C."/>
            <person name="Pavan W.J."/>
            <person name="Pavesi G."/>
            <person name="Pesole G."/>
            <person name="Petrovsky N."/>
            <person name="Piazza S."/>
            <person name="Reed J."/>
            <person name="Reid J.F."/>
            <person name="Ring B.Z."/>
            <person name="Ringwald M."/>
            <person name="Rost B."/>
            <person name="Ruan Y."/>
            <person name="Salzberg S.L."/>
            <person name="Sandelin A."/>
            <person name="Schneider C."/>
            <person name="Schoenbach C."/>
            <person name="Sekiguchi K."/>
            <person name="Semple C.A."/>
            <person name="Seno S."/>
            <person name="Sessa L."/>
            <person name="Sheng Y."/>
            <person name="Shibata Y."/>
            <person name="Shimada H."/>
            <person name="Shimada K."/>
            <person name="Silva D."/>
            <person name="Sinclair B."/>
            <person name="Sperling S."/>
            <person name="Stupka E."/>
            <person name="Sugiura K."/>
            <person name="Sultana R."/>
            <person name="Takenaka Y."/>
            <person name="Taki K."/>
            <person name="Tammoja K."/>
            <person name="Tan S.L."/>
            <person name="Tang S."/>
            <person name="Taylor M.S."/>
            <person name="Tegner J."/>
            <person name="Teichmann S.A."/>
            <person name="Ueda H.R."/>
            <person name="van Nimwegen E."/>
            <person name="Verardo R."/>
            <person name="Wei C.L."/>
            <person name="Yagi K."/>
            <person name="Yamanishi H."/>
            <person name="Zabarovsky E."/>
            <person name="Zhu S."/>
            <person name="Zimmer A."/>
            <person name="Hide W."/>
            <person name="Bult C."/>
            <person name="Grimmond S.M."/>
            <person name="Teasdale R.D."/>
            <person name="Liu E.T."/>
            <person name="Brusic V."/>
            <person name="Quackenbush J."/>
            <person name="Wahlestedt C."/>
            <person name="Mattick J.S."/>
            <person name="Hume D.A."/>
            <person name="Kai C."/>
            <person name="Sasaki D."/>
            <person name="Tomaru Y."/>
            <person name="Fukuda S."/>
            <person name="Kanamori-Katayama M."/>
            <person name="Suzuki M."/>
            <person name="Aoki J."/>
            <person name="Arakawa T."/>
            <person name="Iida J."/>
            <person name="Imamura K."/>
            <person name="Itoh M."/>
            <person name="Kato T."/>
            <person name="Kawaji H."/>
            <person name="Kawagashira N."/>
            <person name="Kawashima T."/>
            <person name="Kojima M."/>
            <person name="Kondo S."/>
            <person name="Konno H."/>
            <person name="Nakano K."/>
            <person name="Ninomiya N."/>
            <person name="Nishio T."/>
            <person name="Okada M."/>
            <person name="Plessy C."/>
            <person name="Shibata K."/>
            <person name="Shiraki T."/>
            <person name="Suzuki S."/>
            <person name="Tagami M."/>
            <person name="Waki K."/>
            <person name="Watahiki A."/>
            <person name="Okamura-Oho Y."/>
            <person name="Suzuki H."/>
            <person name="Kawai J."/>
            <person name="Hayashizaki Y."/>
        </authorList>
    </citation>
    <scope>NUCLEOTIDE SEQUENCE [LARGE SCALE MRNA]</scope>
</reference>
<reference key="5">
    <citation type="journal article" date="2004" name="BioMetals">
        <title>Baculovirus expression of mouse lactoferrin receptor and tissue distribution in the mouse.</title>
        <authorList>
            <person name="Suzuki Y.A."/>
            <person name="Lonnerdal B."/>
        </authorList>
    </citation>
    <scope>TISSUE SPECIFICITY</scope>
    <scope>DEVELOPMENTAL STAGE</scope>
</reference>
<reference key="6">
    <citation type="journal article" date="2004" name="J. Immunol.">
        <title>Innate BALB/c enteric epithelial responses to Trichinella spiralis: inducible expression of a novel goblet cell lectin, intelectin-2, and its natural deletion in C57BL/10 mice.</title>
        <authorList>
            <person name="Pemberton A.D."/>
            <person name="Knight P.A."/>
            <person name="Gamble J."/>
            <person name="Colledge W.H."/>
            <person name="Lee J.K."/>
            <person name="Pierce M."/>
            <person name="Miller H.R."/>
        </authorList>
    </citation>
    <scope>TISSUE SPECIFICITY</scope>
    <source>
        <strain>BALB/cJ</strain>
        <tissue>Intestine</tissue>
    </source>
</reference>
<reference key="7">
    <citation type="journal article" date="2006" name="Biochem. Cell Biol.">
        <title>Ontogenic changes in lactoferrin receptor and DMT1 in mouse small intestine: implications for iron absorption during early life.</title>
        <authorList>
            <person name="Lopez V."/>
            <person name="Suzuki Y.A."/>
            <person name="Loennerdal B."/>
        </authorList>
    </citation>
    <scope>TISSUE SPECIFICITY</scope>
</reference>
<reference key="8">
    <citation type="journal article" date="2006" name="Biochemistry">
        <title>Intelectin: a novel lipid raft-associated protein in the enterocyte brush border.</title>
        <authorList>
            <person name="Wrackmeyer U."/>
            <person name="Hansen G.H."/>
            <person name="Seya T."/>
            <person name="Danielsen E.M."/>
        </authorList>
    </citation>
    <scope>SUBCELLULAR LOCATION</scope>
    <scope>TISSUE SPECIFICITY</scope>
</reference>
<reference key="9">
    <citation type="journal article" date="2007" name="Exp. Parasitol.">
        <title>Nippostrongylus brasiliensis: identification of intelectin-1 and -2 as Stat6-dependent genes expressed in lung and intestine during infection.</title>
        <authorList>
            <person name="Voehringer D."/>
            <person name="Stanley S.A."/>
            <person name="Cox J.S."/>
            <person name="Completo G.C."/>
            <person name="Lowary T.L."/>
            <person name="Locksley R.M."/>
        </authorList>
    </citation>
    <scope>INDUCTION</scope>
</reference>
<reference key="10">
    <citation type="journal article" date="2007" name="Glycobiology">
        <title>Differential structure and activity between human and mouse intelectin-1: human intelectin-1 is a disulfide-linked trimer, whereas mouse homologue is a monomer.</title>
        <authorList>
            <person name="Tsuji S."/>
            <person name="Yamashita M."/>
            <person name="Nishiyama A."/>
            <person name="Shinohara T."/>
            <person name="Li Z."/>
            <person name="Myrvik Q.N."/>
            <person name="Hoffman D.R."/>
            <person name="Henriksen R.A."/>
            <person name="Shibata Y."/>
        </authorList>
    </citation>
    <scope>SUBUNIT</scope>
    <scope>MASS SPECTROMETRY</scope>
</reference>
<reference key="11">
    <citation type="journal article" date="2015" name="Nat. Struct. Mol. Biol.">
        <title>Recognition of microbial glycans by human intelectin-1.</title>
        <authorList>
            <person name="Wesener D.A."/>
            <person name="Wangkanont K."/>
            <person name="McBride R."/>
            <person name="Song X."/>
            <person name="Kraft M.B."/>
            <person name="Hodges H.L."/>
            <person name="Zarling L.C."/>
            <person name="Splain R.A."/>
            <person name="Smith D.F."/>
            <person name="Cummings R.D."/>
            <person name="Paulson J.C."/>
            <person name="Forest K.T."/>
            <person name="Kiessling L.L."/>
        </authorList>
    </citation>
    <scope>FUNCTION</scope>
</reference>